<comment type="function">
    <text evidence="1">Catalyzes the oxidation of 3-carboxy-2-hydroxy-4-methylpentanoate (3-isopropylmalate) to 3-carboxy-4-methyl-2-oxopentanoate. The product decarboxylates to 4-methyl-2 oxopentanoate.</text>
</comment>
<comment type="catalytic activity">
    <reaction evidence="1">
        <text>(2R,3S)-3-isopropylmalate + NAD(+) = 4-methyl-2-oxopentanoate + CO2 + NADH</text>
        <dbReference type="Rhea" id="RHEA:32271"/>
        <dbReference type="ChEBI" id="CHEBI:16526"/>
        <dbReference type="ChEBI" id="CHEBI:17865"/>
        <dbReference type="ChEBI" id="CHEBI:35121"/>
        <dbReference type="ChEBI" id="CHEBI:57540"/>
        <dbReference type="ChEBI" id="CHEBI:57945"/>
        <dbReference type="EC" id="1.1.1.85"/>
    </reaction>
</comment>
<comment type="cofactor">
    <cofactor evidence="1">
        <name>Mg(2+)</name>
        <dbReference type="ChEBI" id="CHEBI:18420"/>
    </cofactor>
    <cofactor evidence="1">
        <name>Mn(2+)</name>
        <dbReference type="ChEBI" id="CHEBI:29035"/>
    </cofactor>
    <text evidence="1">Binds 1 Mg(2+) or Mn(2+) ion per subunit.</text>
</comment>
<comment type="pathway">
    <text evidence="1">Amino-acid biosynthesis; L-leucine biosynthesis; L-leucine from 3-methyl-2-oxobutanoate: step 3/4.</text>
</comment>
<comment type="subunit">
    <text evidence="1">Homodimer.</text>
</comment>
<comment type="subcellular location">
    <subcellularLocation>
        <location evidence="1">Cytoplasm</location>
    </subcellularLocation>
</comment>
<comment type="similarity">
    <text evidence="1">Belongs to the isocitrate and isopropylmalate dehydrogenases family. LeuB type 1 subfamily.</text>
</comment>
<sequence length="357" mass="38196">MSKQILILPGDGIGPEIMAEAVKVLQRIDTQHGLGFELVYDELGGAAYDKYGSPLADETLERARAADAVLLGAVGGPQWDTIDPSLRPERGLLKIRSQLGLFANLRPALLYPQLADASTLKPEVVAGLDLLILRELTGGIYFGQPRGNRTLDNGERQAYDTLPYSESEICRIAKAGFEMARLRGKKLCSVDKANVLASSQLWRAVVEEVAKDYPDIALSHMYVDNAAMQLVRAPKQFDVIVTDNMFGDILSDQASMLTGSIGMLPSASLDANSKGMYEPCHGSAPDIAGKGIANPLATILSVAMMLRYTFAQADAADAIERAVGKVLDQGLRTADIWSEGTTKVGTVAMGDAVVAAL</sequence>
<protein>
    <recommendedName>
        <fullName evidence="1">3-isopropylmalate dehydrogenase</fullName>
        <ecNumber evidence="1">1.1.1.85</ecNumber>
    </recommendedName>
    <alternativeName>
        <fullName evidence="1">3-IPM-DH</fullName>
    </alternativeName>
    <alternativeName>
        <fullName evidence="1">Beta-IPM dehydrogenase</fullName>
        <shortName evidence="1">IMDH</shortName>
    </alternativeName>
</protein>
<accession>Q2P762</accession>
<proteinExistence type="inferred from homology"/>
<reference key="1">
    <citation type="journal article" date="2005" name="Jpn. Agric. Res. Q.">
        <title>Genome sequence of Xanthomonas oryzae pv. oryzae suggests contribution of large numbers of effector genes and insertion sequences to its race diversity.</title>
        <authorList>
            <person name="Ochiai H."/>
            <person name="Inoue Y."/>
            <person name="Takeya M."/>
            <person name="Sasaki A."/>
            <person name="Kaku H."/>
        </authorList>
    </citation>
    <scope>NUCLEOTIDE SEQUENCE [LARGE SCALE GENOMIC DNA]</scope>
    <source>
        <strain>MAFF 311018</strain>
    </source>
</reference>
<dbReference type="EC" id="1.1.1.85" evidence="1"/>
<dbReference type="EMBL" id="AP008229">
    <property type="protein sequence ID" value="BAE67615.1"/>
    <property type="molecule type" value="Genomic_DNA"/>
</dbReference>
<dbReference type="RefSeq" id="WP_011257808.1">
    <property type="nucleotide sequence ID" value="NC_007705.1"/>
</dbReference>
<dbReference type="SMR" id="Q2P762"/>
<dbReference type="KEGG" id="xom:XOO0860"/>
<dbReference type="HOGENOM" id="CLU_031953_0_3_6"/>
<dbReference type="UniPathway" id="UPA00048">
    <property type="reaction ID" value="UER00072"/>
</dbReference>
<dbReference type="GO" id="GO:0005829">
    <property type="term" value="C:cytosol"/>
    <property type="evidence" value="ECO:0007669"/>
    <property type="project" value="TreeGrafter"/>
</dbReference>
<dbReference type="GO" id="GO:0003862">
    <property type="term" value="F:3-isopropylmalate dehydrogenase activity"/>
    <property type="evidence" value="ECO:0007669"/>
    <property type="project" value="UniProtKB-UniRule"/>
</dbReference>
<dbReference type="GO" id="GO:0000287">
    <property type="term" value="F:magnesium ion binding"/>
    <property type="evidence" value="ECO:0007669"/>
    <property type="project" value="InterPro"/>
</dbReference>
<dbReference type="GO" id="GO:0051287">
    <property type="term" value="F:NAD binding"/>
    <property type="evidence" value="ECO:0007669"/>
    <property type="project" value="InterPro"/>
</dbReference>
<dbReference type="GO" id="GO:0009098">
    <property type="term" value="P:L-leucine biosynthetic process"/>
    <property type="evidence" value="ECO:0007669"/>
    <property type="project" value="UniProtKB-UniRule"/>
</dbReference>
<dbReference type="FunFam" id="3.40.718.10:FF:000004">
    <property type="entry name" value="3-isopropylmalate dehydrogenase"/>
    <property type="match status" value="1"/>
</dbReference>
<dbReference type="Gene3D" id="3.40.718.10">
    <property type="entry name" value="Isopropylmalate Dehydrogenase"/>
    <property type="match status" value="1"/>
</dbReference>
<dbReference type="HAMAP" id="MF_01033">
    <property type="entry name" value="LeuB_type1"/>
    <property type="match status" value="1"/>
</dbReference>
<dbReference type="InterPro" id="IPR019818">
    <property type="entry name" value="IsoCit/isopropylmalate_DH_CS"/>
</dbReference>
<dbReference type="InterPro" id="IPR024084">
    <property type="entry name" value="IsoPropMal-DH-like_dom"/>
</dbReference>
<dbReference type="InterPro" id="IPR004429">
    <property type="entry name" value="Isopropylmalate_DH"/>
</dbReference>
<dbReference type="NCBIfam" id="TIGR00169">
    <property type="entry name" value="leuB"/>
    <property type="match status" value="1"/>
</dbReference>
<dbReference type="PANTHER" id="PTHR42979">
    <property type="entry name" value="3-ISOPROPYLMALATE DEHYDROGENASE"/>
    <property type="match status" value="1"/>
</dbReference>
<dbReference type="PANTHER" id="PTHR42979:SF1">
    <property type="entry name" value="3-ISOPROPYLMALATE DEHYDROGENASE"/>
    <property type="match status" value="1"/>
</dbReference>
<dbReference type="Pfam" id="PF00180">
    <property type="entry name" value="Iso_dh"/>
    <property type="match status" value="1"/>
</dbReference>
<dbReference type="SMART" id="SM01329">
    <property type="entry name" value="Iso_dh"/>
    <property type="match status" value="1"/>
</dbReference>
<dbReference type="SUPFAM" id="SSF53659">
    <property type="entry name" value="Isocitrate/Isopropylmalate dehydrogenase-like"/>
    <property type="match status" value="1"/>
</dbReference>
<dbReference type="PROSITE" id="PS00470">
    <property type="entry name" value="IDH_IMDH"/>
    <property type="match status" value="1"/>
</dbReference>
<gene>
    <name evidence="1" type="primary">leuB</name>
    <name type="ordered locus">XOO0860</name>
</gene>
<organism>
    <name type="scientific">Xanthomonas oryzae pv. oryzae (strain MAFF 311018)</name>
    <dbReference type="NCBI Taxonomy" id="342109"/>
    <lineage>
        <taxon>Bacteria</taxon>
        <taxon>Pseudomonadati</taxon>
        <taxon>Pseudomonadota</taxon>
        <taxon>Gammaproteobacteria</taxon>
        <taxon>Lysobacterales</taxon>
        <taxon>Lysobacteraceae</taxon>
        <taxon>Xanthomonas</taxon>
    </lineage>
</organism>
<keyword id="KW-0028">Amino-acid biosynthesis</keyword>
<keyword id="KW-0100">Branched-chain amino acid biosynthesis</keyword>
<keyword id="KW-0963">Cytoplasm</keyword>
<keyword id="KW-0432">Leucine biosynthesis</keyword>
<keyword id="KW-0460">Magnesium</keyword>
<keyword id="KW-0464">Manganese</keyword>
<keyword id="KW-0479">Metal-binding</keyword>
<keyword id="KW-0520">NAD</keyword>
<keyword id="KW-0560">Oxidoreductase</keyword>
<evidence type="ECO:0000255" key="1">
    <source>
        <dbReference type="HAMAP-Rule" id="MF_01033"/>
    </source>
</evidence>
<feature type="chain" id="PRO_0000250149" description="3-isopropylmalate dehydrogenase">
    <location>
        <begin position="1"/>
        <end position="357"/>
    </location>
</feature>
<feature type="binding site" evidence="1">
    <location>
        <begin position="76"/>
        <end position="89"/>
    </location>
    <ligand>
        <name>NAD(+)</name>
        <dbReference type="ChEBI" id="CHEBI:57540"/>
    </ligand>
</feature>
<feature type="binding site" evidence="1">
    <location>
        <position position="96"/>
    </location>
    <ligand>
        <name>substrate</name>
    </ligand>
</feature>
<feature type="binding site" evidence="1">
    <location>
        <position position="106"/>
    </location>
    <ligand>
        <name>substrate</name>
    </ligand>
</feature>
<feature type="binding site" evidence="1">
    <location>
        <position position="134"/>
    </location>
    <ligand>
        <name>substrate</name>
    </ligand>
</feature>
<feature type="binding site" evidence="1">
    <location>
        <position position="224"/>
    </location>
    <ligand>
        <name>Mg(2+)</name>
        <dbReference type="ChEBI" id="CHEBI:18420"/>
    </ligand>
</feature>
<feature type="binding site" evidence="1">
    <location>
        <position position="224"/>
    </location>
    <ligand>
        <name>substrate</name>
    </ligand>
</feature>
<feature type="binding site" evidence="1">
    <location>
        <position position="248"/>
    </location>
    <ligand>
        <name>Mg(2+)</name>
        <dbReference type="ChEBI" id="CHEBI:18420"/>
    </ligand>
</feature>
<feature type="binding site" evidence="1">
    <location>
        <position position="252"/>
    </location>
    <ligand>
        <name>Mg(2+)</name>
        <dbReference type="ChEBI" id="CHEBI:18420"/>
    </ligand>
</feature>
<feature type="binding site" evidence="1">
    <location>
        <begin position="282"/>
        <end position="294"/>
    </location>
    <ligand>
        <name>NAD(+)</name>
        <dbReference type="ChEBI" id="CHEBI:57540"/>
    </ligand>
</feature>
<feature type="site" description="Important for catalysis" evidence="1">
    <location>
        <position position="141"/>
    </location>
</feature>
<feature type="site" description="Important for catalysis" evidence="1">
    <location>
        <position position="192"/>
    </location>
</feature>
<name>LEU3_XANOM</name>